<proteinExistence type="inferred from homology"/>
<name>GLCU_STAAM</name>
<feature type="chain" id="PRO_0000213625" description="Probable glucose uptake protein GlcU">
    <location>
        <begin position="1"/>
        <end position="287"/>
    </location>
</feature>
<feature type="transmembrane region" description="Helical" evidence="2">
    <location>
        <begin position="7"/>
        <end position="29"/>
    </location>
</feature>
<feature type="transmembrane region" description="Helical" evidence="2">
    <location>
        <begin position="34"/>
        <end position="53"/>
    </location>
</feature>
<feature type="transmembrane region" description="Helical" evidence="2">
    <location>
        <begin position="60"/>
        <end position="77"/>
    </location>
</feature>
<feature type="transmembrane region" description="Helical" evidence="2">
    <location>
        <begin position="114"/>
        <end position="136"/>
    </location>
</feature>
<feature type="transmembrane region" description="Helical" evidence="2">
    <location>
        <begin position="157"/>
        <end position="179"/>
    </location>
</feature>
<feature type="transmembrane region" description="Helical" evidence="2">
    <location>
        <begin position="184"/>
        <end position="201"/>
    </location>
</feature>
<feature type="transmembrane region" description="Helical" evidence="2">
    <location>
        <begin position="208"/>
        <end position="230"/>
    </location>
</feature>
<feature type="transmembrane region" description="Helical" evidence="2">
    <location>
        <begin position="235"/>
        <end position="257"/>
    </location>
</feature>
<feature type="transmembrane region" description="Helical" evidence="2">
    <location>
        <begin position="269"/>
        <end position="286"/>
    </location>
</feature>
<accession>P60943</accession>
<accession>Q99S15</accession>
<gene>
    <name type="primary">glcU</name>
    <name type="ordered locus">SAV2256</name>
</gene>
<comment type="function">
    <text evidence="1">Involved in the uptake of glucose.</text>
</comment>
<comment type="subcellular location">
    <subcellularLocation>
        <location evidence="3">Cell membrane</location>
        <topology evidence="3">Multi-pass membrane protein</topology>
    </subcellularLocation>
</comment>
<comment type="similarity">
    <text evidence="3">Belongs to the GRP transporter (TC 2.A.7.5) family.</text>
</comment>
<reference key="1">
    <citation type="journal article" date="2001" name="Lancet">
        <title>Whole genome sequencing of meticillin-resistant Staphylococcus aureus.</title>
        <authorList>
            <person name="Kuroda M."/>
            <person name="Ohta T."/>
            <person name="Uchiyama I."/>
            <person name="Baba T."/>
            <person name="Yuzawa H."/>
            <person name="Kobayashi I."/>
            <person name="Cui L."/>
            <person name="Oguchi A."/>
            <person name="Aoki K."/>
            <person name="Nagai Y."/>
            <person name="Lian J.-Q."/>
            <person name="Ito T."/>
            <person name="Kanamori M."/>
            <person name="Matsumaru H."/>
            <person name="Maruyama A."/>
            <person name="Murakami H."/>
            <person name="Hosoyama A."/>
            <person name="Mizutani-Ui Y."/>
            <person name="Takahashi N.K."/>
            <person name="Sawano T."/>
            <person name="Inoue R."/>
            <person name="Kaito C."/>
            <person name="Sekimizu K."/>
            <person name="Hirakawa H."/>
            <person name="Kuhara S."/>
            <person name="Goto S."/>
            <person name="Yabuzaki J."/>
            <person name="Kanehisa M."/>
            <person name="Yamashita A."/>
            <person name="Oshima K."/>
            <person name="Furuya K."/>
            <person name="Yoshino C."/>
            <person name="Shiba T."/>
            <person name="Hattori M."/>
            <person name="Ogasawara N."/>
            <person name="Hayashi H."/>
            <person name="Hiramatsu K."/>
        </authorList>
    </citation>
    <scope>NUCLEOTIDE SEQUENCE [LARGE SCALE GENOMIC DNA]</scope>
    <source>
        <strain>Mu50 / ATCC 700699</strain>
    </source>
</reference>
<organism>
    <name type="scientific">Staphylococcus aureus (strain Mu50 / ATCC 700699)</name>
    <dbReference type="NCBI Taxonomy" id="158878"/>
    <lineage>
        <taxon>Bacteria</taxon>
        <taxon>Bacillati</taxon>
        <taxon>Bacillota</taxon>
        <taxon>Bacilli</taxon>
        <taxon>Bacillales</taxon>
        <taxon>Staphylococcaceae</taxon>
        <taxon>Staphylococcus</taxon>
    </lineage>
</organism>
<protein>
    <recommendedName>
        <fullName>Probable glucose uptake protein GlcU</fullName>
    </recommendedName>
</protein>
<dbReference type="EMBL" id="BA000017">
    <property type="protein sequence ID" value="BAB58418.1"/>
    <property type="molecule type" value="Genomic_DNA"/>
</dbReference>
<dbReference type="RefSeq" id="WP_001159898.1">
    <property type="nucleotide sequence ID" value="NC_002758.2"/>
</dbReference>
<dbReference type="KEGG" id="sav:SAV2256"/>
<dbReference type="HOGENOM" id="CLU_076024_0_0_9"/>
<dbReference type="PhylomeDB" id="P60943"/>
<dbReference type="PHI-base" id="PHI:6311"/>
<dbReference type="Proteomes" id="UP000002481">
    <property type="component" value="Chromosome"/>
</dbReference>
<dbReference type="GO" id="GO:0005886">
    <property type="term" value="C:plasma membrane"/>
    <property type="evidence" value="ECO:0007669"/>
    <property type="project" value="UniProtKB-SubCell"/>
</dbReference>
<dbReference type="GO" id="GO:0015144">
    <property type="term" value="F:carbohydrate transmembrane transporter activity"/>
    <property type="evidence" value="ECO:0007669"/>
    <property type="project" value="InterPro"/>
</dbReference>
<dbReference type="InterPro" id="IPR010651">
    <property type="entry name" value="Sugar_transport"/>
</dbReference>
<dbReference type="PANTHER" id="PTHR16119">
    <property type="entry name" value="TRANSMEMBRANE PROTEIN 144"/>
    <property type="match status" value="1"/>
</dbReference>
<dbReference type="PANTHER" id="PTHR16119:SF17">
    <property type="entry name" value="TRANSMEMBRANE PROTEIN 144"/>
    <property type="match status" value="1"/>
</dbReference>
<dbReference type="Pfam" id="PF06800">
    <property type="entry name" value="Sugar_transport"/>
    <property type="match status" value="1"/>
</dbReference>
<dbReference type="SUPFAM" id="SSF103481">
    <property type="entry name" value="Multidrug resistance efflux transporter EmrE"/>
    <property type="match status" value="2"/>
</dbReference>
<sequence>MQFLDFLIALLPALFWGSVVLINVFVGGGPYNQIRGTTLGALIVGLGLLITGFAKFNNPTVIIVGLISGALWAFGQANQLKSISLIGVSNTMPVSTGMQLVGTTLFSVIFLGEWSSMTQIIFGLIAMILLVTGVALTSLKAKNERQSDNPEFKKAMGILIVSTVGYVGFVVLGDIFGVGGTDALFFQSVGMAIGGFILSMNHKTSLKSTALNLLPGVIWGIGNLFMFYSQPKVGVATSFSLSQLLVIVSTLGGIFILGERKDRRQMTGIWAGIIIIVIAAIILGNLK</sequence>
<evidence type="ECO:0000250" key="1"/>
<evidence type="ECO:0000255" key="2"/>
<evidence type="ECO:0000305" key="3"/>
<keyword id="KW-1003">Cell membrane</keyword>
<keyword id="KW-0472">Membrane</keyword>
<keyword id="KW-0762">Sugar transport</keyword>
<keyword id="KW-0812">Transmembrane</keyword>
<keyword id="KW-1133">Transmembrane helix</keyword>
<keyword id="KW-0813">Transport</keyword>